<proteinExistence type="inferred from homology"/>
<organism>
    <name type="scientific">Pseudomonas fluorescens (strain ATCC BAA-477 / NRRL B-23932 / Pf-5)</name>
    <dbReference type="NCBI Taxonomy" id="220664"/>
    <lineage>
        <taxon>Bacteria</taxon>
        <taxon>Pseudomonadati</taxon>
        <taxon>Pseudomonadota</taxon>
        <taxon>Gammaproteobacteria</taxon>
        <taxon>Pseudomonadales</taxon>
        <taxon>Pseudomonadaceae</taxon>
        <taxon>Pseudomonas</taxon>
    </lineage>
</organism>
<comment type="function">
    <text evidence="1">Catalyzes the ATP-dependent 2-thiolation of cytidine in position 32 of tRNA, to form 2-thiocytidine (s(2)C32). The sulfur atoms are provided by the cysteine/cysteine desulfurase (IscS) system.</text>
</comment>
<comment type="catalytic activity">
    <reaction evidence="1">
        <text>cytidine(32) in tRNA + S-sulfanyl-L-cysteinyl-[cysteine desulfurase] + AH2 + ATP = 2-thiocytidine(32) in tRNA + L-cysteinyl-[cysteine desulfurase] + A + AMP + diphosphate + H(+)</text>
        <dbReference type="Rhea" id="RHEA:57048"/>
        <dbReference type="Rhea" id="RHEA-COMP:10288"/>
        <dbReference type="Rhea" id="RHEA-COMP:12157"/>
        <dbReference type="Rhea" id="RHEA-COMP:12158"/>
        <dbReference type="Rhea" id="RHEA-COMP:14821"/>
        <dbReference type="ChEBI" id="CHEBI:13193"/>
        <dbReference type="ChEBI" id="CHEBI:15378"/>
        <dbReference type="ChEBI" id="CHEBI:17499"/>
        <dbReference type="ChEBI" id="CHEBI:29950"/>
        <dbReference type="ChEBI" id="CHEBI:30616"/>
        <dbReference type="ChEBI" id="CHEBI:33019"/>
        <dbReference type="ChEBI" id="CHEBI:61963"/>
        <dbReference type="ChEBI" id="CHEBI:82748"/>
        <dbReference type="ChEBI" id="CHEBI:141453"/>
        <dbReference type="ChEBI" id="CHEBI:456215"/>
    </reaction>
    <physiologicalReaction direction="left-to-right" evidence="1">
        <dbReference type="Rhea" id="RHEA:57049"/>
    </physiologicalReaction>
</comment>
<comment type="cofactor">
    <cofactor evidence="1">
        <name>Mg(2+)</name>
        <dbReference type="ChEBI" id="CHEBI:18420"/>
    </cofactor>
</comment>
<comment type="cofactor">
    <cofactor evidence="1">
        <name>[4Fe-4S] cluster</name>
        <dbReference type="ChEBI" id="CHEBI:49883"/>
    </cofactor>
    <text evidence="1">Binds 1 [4Fe-4S] cluster per subunit. The cluster is chelated by three Cys residues, the fourth Fe has a free coordination site that may bind a sulfur atom transferred from the persulfide of IscS.</text>
</comment>
<comment type="pathway">
    <text evidence="1">tRNA modification.</text>
</comment>
<comment type="subunit">
    <text evidence="1">Homodimer.</text>
</comment>
<comment type="subcellular location">
    <subcellularLocation>
        <location evidence="1">Cytoplasm</location>
    </subcellularLocation>
</comment>
<comment type="miscellaneous">
    <text evidence="1">The thiolation reaction likely consists of two steps: a first activation step by ATP to form an adenylated intermediate of the target base of tRNA, and a second nucleophilic substitution step of the sulfur (S) atom supplied by the hydrosulfide attached to the Fe-S cluster.</text>
</comment>
<comment type="similarity">
    <text evidence="1">Belongs to the TtcA family.</text>
</comment>
<reference key="1">
    <citation type="journal article" date="2005" name="Nat. Biotechnol.">
        <title>Complete genome sequence of the plant commensal Pseudomonas fluorescens Pf-5.</title>
        <authorList>
            <person name="Paulsen I.T."/>
            <person name="Press C.M."/>
            <person name="Ravel J."/>
            <person name="Kobayashi D.Y."/>
            <person name="Myers G.S.A."/>
            <person name="Mavrodi D.V."/>
            <person name="DeBoy R.T."/>
            <person name="Seshadri R."/>
            <person name="Ren Q."/>
            <person name="Madupu R."/>
            <person name="Dodson R.J."/>
            <person name="Durkin A.S."/>
            <person name="Brinkac L.M."/>
            <person name="Daugherty S.C."/>
            <person name="Sullivan S.A."/>
            <person name="Rosovitz M.J."/>
            <person name="Gwinn M.L."/>
            <person name="Zhou L."/>
            <person name="Schneider D.J."/>
            <person name="Cartinhour S.W."/>
            <person name="Nelson W.C."/>
            <person name="Weidman J."/>
            <person name="Watkins K."/>
            <person name="Tran K."/>
            <person name="Khouri H."/>
            <person name="Pierson E.A."/>
            <person name="Pierson L.S. III"/>
            <person name="Thomashow L.S."/>
            <person name="Loper J.E."/>
        </authorList>
    </citation>
    <scope>NUCLEOTIDE SEQUENCE [LARGE SCALE GENOMIC DNA]</scope>
    <source>
        <strain>ATCC BAA-477 / NRRL B-23932 / Pf-5</strain>
    </source>
</reference>
<name>TTCA_PSEF5</name>
<gene>
    <name evidence="1" type="primary">ttcA</name>
    <name type="ordered locus">PFL_4463</name>
</gene>
<sequence>MGTLTVNQNKLQKRLRRQAGEAVADFNMIEEGDKVMVCLSGGKDSYTMLDVLLHLQKVAPIKFEIVAVNMDQKQPGFPEHVLPAYLKELGIEYHIVEKDTYSVVKELIPEGKTTCSLCSRLRRGTLYTFADEIGATKMALGHHRDDIVETFFLNMFYNGSLKAMPPKLLADDGRNVVIRPLAYCSEKDIQAYSDLKQFPIIPCNLCGSQENLQRQVVKEMLQEWERKTPGRTESIFRGLQNVIPSQLADRNLFDFTSLRIDDSATPRFVNVVNL</sequence>
<keyword id="KW-0004">4Fe-4S</keyword>
<keyword id="KW-0067">ATP-binding</keyword>
<keyword id="KW-0963">Cytoplasm</keyword>
<keyword id="KW-0408">Iron</keyword>
<keyword id="KW-0411">Iron-sulfur</keyword>
<keyword id="KW-0460">Magnesium</keyword>
<keyword id="KW-0479">Metal-binding</keyword>
<keyword id="KW-0547">Nucleotide-binding</keyword>
<keyword id="KW-0694">RNA-binding</keyword>
<keyword id="KW-0808">Transferase</keyword>
<keyword id="KW-0819">tRNA processing</keyword>
<keyword id="KW-0820">tRNA-binding</keyword>
<dbReference type="EC" id="2.8.1.-" evidence="1"/>
<dbReference type="EMBL" id="CP000076">
    <property type="protein sequence ID" value="AAY93714.2"/>
    <property type="molecule type" value="Genomic_DNA"/>
</dbReference>
<dbReference type="RefSeq" id="WP_011062726.1">
    <property type="nucleotide sequence ID" value="NC_004129.6"/>
</dbReference>
<dbReference type="SMR" id="Q4K882"/>
<dbReference type="STRING" id="220664.PFL_4463"/>
<dbReference type="KEGG" id="pfl:PFL_4463"/>
<dbReference type="PATRIC" id="fig|220664.5.peg.4568"/>
<dbReference type="eggNOG" id="COG0037">
    <property type="taxonomic scope" value="Bacteria"/>
</dbReference>
<dbReference type="HOGENOM" id="CLU_026481_0_0_6"/>
<dbReference type="Proteomes" id="UP000008540">
    <property type="component" value="Chromosome"/>
</dbReference>
<dbReference type="GO" id="GO:0005737">
    <property type="term" value="C:cytoplasm"/>
    <property type="evidence" value="ECO:0007669"/>
    <property type="project" value="UniProtKB-SubCell"/>
</dbReference>
<dbReference type="GO" id="GO:0051539">
    <property type="term" value="F:4 iron, 4 sulfur cluster binding"/>
    <property type="evidence" value="ECO:0007669"/>
    <property type="project" value="UniProtKB-UniRule"/>
</dbReference>
<dbReference type="GO" id="GO:0005524">
    <property type="term" value="F:ATP binding"/>
    <property type="evidence" value="ECO:0007669"/>
    <property type="project" value="UniProtKB-UniRule"/>
</dbReference>
<dbReference type="GO" id="GO:0000287">
    <property type="term" value="F:magnesium ion binding"/>
    <property type="evidence" value="ECO:0007669"/>
    <property type="project" value="UniProtKB-UniRule"/>
</dbReference>
<dbReference type="GO" id="GO:0016783">
    <property type="term" value="F:sulfurtransferase activity"/>
    <property type="evidence" value="ECO:0007669"/>
    <property type="project" value="UniProtKB-UniRule"/>
</dbReference>
<dbReference type="GO" id="GO:0000049">
    <property type="term" value="F:tRNA binding"/>
    <property type="evidence" value="ECO:0007669"/>
    <property type="project" value="UniProtKB-KW"/>
</dbReference>
<dbReference type="GO" id="GO:0034227">
    <property type="term" value="P:tRNA thio-modification"/>
    <property type="evidence" value="ECO:0007669"/>
    <property type="project" value="UniProtKB-UniRule"/>
</dbReference>
<dbReference type="CDD" id="cd24138">
    <property type="entry name" value="TtcA-like"/>
    <property type="match status" value="1"/>
</dbReference>
<dbReference type="Gene3D" id="3.40.50.620">
    <property type="entry name" value="HUPs"/>
    <property type="match status" value="1"/>
</dbReference>
<dbReference type="HAMAP" id="MF_01850">
    <property type="entry name" value="TtcA"/>
    <property type="match status" value="1"/>
</dbReference>
<dbReference type="InterPro" id="IPR014729">
    <property type="entry name" value="Rossmann-like_a/b/a_fold"/>
</dbReference>
<dbReference type="InterPro" id="IPR011063">
    <property type="entry name" value="TilS/TtcA_N"/>
</dbReference>
<dbReference type="InterPro" id="IPR012089">
    <property type="entry name" value="tRNA_Cyd_32_2_STrfase"/>
</dbReference>
<dbReference type="InterPro" id="IPR035107">
    <property type="entry name" value="tRNA_thiolation_TtcA_Ctu1"/>
</dbReference>
<dbReference type="NCBIfam" id="NF007972">
    <property type="entry name" value="PRK10696.1"/>
    <property type="match status" value="1"/>
</dbReference>
<dbReference type="PANTHER" id="PTHR43686:SF1">
    <property type="entry name" value="AMINOTRAN_5 DOMAIN-CONTAINING PROTEIN"/>
    <property type="match status" value="1"/>
</dbReference>
<dbReference type="PANTHER" id="PTHR43686">
    <property type="entry name" value="SULFURTRANSFERASE-RELATED"/>
    <property type="match status" value="1"/>
</dbReference>
<dbReference type="Pfam" id="PF01171">
    <property type="entry name" value="ATP_bind_3"/>
    <property type="match status" value="1"/>
</dbReference>
<dbReference type="PIRSF" id="PIRSF004976">
    <property type="entry name" value="ATPase_YdaO"/>
    <property type="match status" value="1"/>
</dbReference>
<dbReference type="SUPFAM" id="SSF52402">
    <property type="entry name" value="Adenine nucleotide alpha hydrolases-like"/>
    <property type="match status" value="1"/>
</dbReference>
<evidence type="ECO:0000255" key="1">
    <source>
        <dbReference type="HAMAP-Rule" id="MF_01850"/>
    </source>
</evidence>
<protein>
    <recommendedName>
        <fullName evidence="1">tRNA-cytidine(32) 2-sulfurtransferase</fullName>
        <ecNumber evidence="1">2.8.1.-</ecNumber>
    </recommendedName>
    <alternativeName>
        <fullName evidence="1">Two-thiocytidine biosynthesis protein A</fullName>
    </alternativeName>
    <alternativeName>
        <fullName evidence="1">tRNA 2-thiocytidine biosynthesis protein TtcA</fullName>
    </alternativeName>
</protein>
<feature type="chain" id="PRO_0000348795" description="tRNA-cytidine(32) 2-sulfurtransferase">
    <location>
        <begin position="1"/>
        <end position="274"/>
    </location>
</feature>
<feature type="short sequence motif" description="PP-loop motif" evidence="1">
    <location>
        <begin position="40"/>
        <end position="45"/>
    </location>
</feature>
<feature type="binding site" evidence="1">
    <location>
        <position position="115"/>
    </location>
    <ligand>
        <name>[4Fe-4S] cluster</name>
        <dbReference type="ChEBI" id="CHEBI:49883"/>
    </ligand>
</feature>
<feature type="binding site" evidence="1">
    <location>
        <position position="118"/>
    </location>
    <ligand>
        <name>[4Fe-4S] cluster</name>
        <dbReference type="ChEBI" id="CHEBI:49883"/>
    </ligand>
</feature>
<feature type="binding site" evidence="1">
    <location>
        <position position="206"/>
    </location>
    <ligand>
        <name>[4Fe-4S] cluster</name>
        <dbReference type="ChEBI" id="CHEBI:49883"/>
    </ligand>
</feature>
<accession>Q4K882</accession>